<keyword id="KW-0975">Bacterial flagellum</keyword>
<keyword id="KW-0998">Cell outer membrane</keyword>
<keyword id="KW-0449">Lipoprotein</keyword>
<keyword id="KW-0472">Membrane</keyword>
<keyword id="KW-0564">Palmitate</keyword>
<keyword id="KW-0732">Signal</keyword>
<dbReference type="EMBL" id="CP001489">
    <property type="protein sequence ID" value="ACO02034.1"/>
    <property type="molecule type" value="Genomic_DNA"/>
</dbReference>
<dbReference type="SMR" id="C0RKA1"/>
<dbReference type="KEGG" id="bmi:BMEA_B0159"/>
<dbReference type="HOGENOM" id="CLU_069313_1_2_5"/>
<dbReference type="Proteomes" id="UP000001748">
    <property type="component" value="Chromosome II"/>
</dbReference>
<dbReference type="GO" id="GO:0009427">
    <property type="term" value="C:bacterial-type flagellum basal body, distal rod, L ring"/>
    <property type="evidence" value="ECO:0007669"/>
    <property type="project" value="InterPro"/>
</dbReference>
<dbReference type="GO" id="GO:0009279">
    <property type="term" value="C:cell outer membrane"/>
    <property type="evidence" value="ECO:0007669"/>
    <property type="project" value="UniProtKB-SubCell"/>
</dbReference>
<dbReference type="GO" id="GO:0003774">
    <property type="term" value="F:cytoskeletal motor activity"/>
    <property type="evidence" value="ECO:0007669"/>
    <property type="project" value="InterPro"/>
</dbReference>
<dbReference type="GO" id="GO:0071973">
    <property type="term" value="P:bacterial-type flagellum-dependent cell motility"/>
    <property type="evidence" value="ECO:0007669"/>
    <property type="project" value="InterPro"/>
</dbReference>
<dbReference type="HAMAP" id="MF_00415">
    <property type="entry name" value="FlgH"/>
    <property type="match status" value="1"/>
</dbReference>
<dbReference type="InterPro" id="IPR000527">
    <property type="entry name" value="Flag_Lring"/>
</dbReference>
<dbReference type="NCBIfam" id="NF001305">
    <property type="entry name" value="PRK00249.1-5"/>
    <property type="match status" value="1"/>
</dbReference>
<dbReference type="PANTHER" id="PTHR34933">
    <property type="entry name" value="FLAGELLAR L-RING PROTEIN"/>
    <property type="match status" value="1"/>
</dbReference>
<dbReference type="PANTHER" id="PTHR34933:SF1">
    <property type="entry name" value="FLAGELLAR L-RING PROTEIN"/>
    <property type="match status" value="1"/>
</dbReference>
<dbReference type="Pfam" id="PF02107">
    <property type="entry name" value="FlgH"/>
    <property type="match status" value="1"/>
</dbReference>
<dbReference type="PRINTS" id="PR01008">
    <property type="entry name" value="FLGLRINGFLGH"/>
</dbReference>
<dbReference type="PROSITE" id="PS51257">
    <property type="entry name" value="PROKAR_LIPOPROTEIN"/>
    <property type="match status" value="1"/>
</dbReference>
<gene>
    <name evidence="1" type="primary">flgH</name>
    <name type="ordered locus">BMEA_B0159</name>
</gene>
<organism>
    <name type="scientific">Brucella melitensis biotype 2 (strain ATCC 23457)</name>
    <dbReference type="NCBI Taxonomy" id="546272"/>
    <lineage>
        <taxon>Bacteria</taxon>
        <taxon>Pseudomonadati</taxon>
        <taxon>Pseudomonadota</taxon>
        <taxon>Alphaproteobacteria</taxon>
        <taxon>Hyphomicrobiales</taxon>
        <taxon>Brucellaceae</taxon>
        <taxon>Brucella/Ochrobactrum group</taxon>
        <taxon>Brucella</taxon>
    </lineage>
</organism>
<accession>C0RKA1</accession>
<evidence type="ECO:0000255" key="1">
    <source>
        <dbReference type="HAMAP-Rule" id="MF_00415"/>
    </source>
</evidence>
<name>FLGH_BRUMB</name>
<proteinExistence type="inferred from homology"/>
<protein>
    <recommendedName>
        <fullName evidence="1">Flagellar L-ring protein</fullName>
    </recommendedName>
    <alternativeName>
        <fullName evidence="1">Basal body L-ring protein</fullName>
    </alternativeName>
</protein>
<comment type="function">
    <text evidence="1">Assembles around the rod to form the L-ring and probably protects the motor/basal body from shearing forces during rotation.</text>
</comment>
<comment type="subunit">
    <text evidence="1">The basal body constitutes a major portion of the flagellar organelle and consists of four rings (L,P,S, and M) mounted on a central rod.</text>
</comment>
<comment type="subcellular location">
    <subcellularLocation>
        <location evidence="1">Cell outer membrane</location>
        <topology evidence="1">Lipid-anchor</topology>
    </subcellularLocation>
    <subcellularLocation>
        <location evidence="1">Bacterial flagellum basal body</location>
    </subcellularLocation>
</comment>
<comment type="similarity">
    <text evidence="1">Belongs to the FlgH family.</text>
</comment>
<feature type="signal peptide" evidence="1">
    <location>
        <begin position="1"/>
        <end position="16"/>
    </location>
</feature>
<feature type="chain" id="PRO_1000134825" description="Flagellar L-ring protein">
    <location>
        <begin position="17"/>
        <end position="238"/>
    </location>
</feature>
<feature type="lipid moiety-binding region" description="N-palmitoyl cysteine" evidence="1">
    <location>
        <position position="17"/>
    </location>
</feature>
<feature type="lipid moiety-binding region" description="S-diacylglycerol cysteine" evidence="1">
    <location>
        <position position="17"/>
    </location>
</feature>
<reference key="1">
    <citation type="submission" date="2009-03" db="EMBL/GenBank/DDBJ databases">
        <title>Brucella melitensis ATCC 23457 whole genome shotgun sequencing project.</title>
        <authorList>
            <person name="Setubal J.C."/>
            <person name="Boyle S."/>
            <person name="Crasta O.R."/>
            <person name="Gillespie J.J."/>
            <person name="Kenyon R.W."/>
            <person name="Lu J."/>
            <person name="Mane S."/>
            <person name="Nagrani S."/>
            <person name="Shallom J.M."/>
            <person name="Shallom S."/>
            <person name="Shukla M."/>
            <person name="Snyder E.E."/>
            <person name="Sobral B.W."/>
            <person name="Wattam A.R."/>
            <person name="Will R."/>
            <person name="Williams K."/>
            <person name="Yoo H."/>
            <person name="Munk C."/>
            <person name="Tapia R."/>
            <person name="Han C."/>
            <person name="Detter J.C."/>
            <person name="Bruce D."/>
            <person name="Brettin T.S."/>
        </authorList>
    </citation>
    <scope>NUCLEOTIDE SEQUENCE [LARGE SCALE GENOMIC DNA]</scope>
    <source>
        <strain>ATCC 23457</strain>
    </source>
</reference>
<sequence length="238" mass="25457">MNKAILAVAMVLLLAGCATKPEEIGRAPDLSPVAAHLGMQNNPQFNGYPARPGKASYSLWDQRSSNFFKDPRAATPGDVLTVIISINDRANLDNKTDRERVSKGIYGGGGSFATSSITGAAAGGDMDASVNTHSDSKSKGKGTIERSEDIRLQIAAIVTDTLPNGNLIIRGSQEVRVNNELRVLNVAGVVRPRDISGNNTISYDKIAEARISYGGRGRLSEIQQPPYGQQILDQFSPF</sequence>